<protein>
    <recommendedName>
        <fullName evidence="1">tRNA-dihydrouridine(16) synthase</fullName>
        <ecNumber evidence="1">1.3.1.-</ecNumber>
    </recommendedName>
    <alternativeName>
        <fullName evidence="1">U16-specific dihydrouridine synthase</fullName>
        <shortName evidence="1">U16-specific Dus</shortName>
    </alternativeName>
    <alternativeName>
        <fullName evidence="1">tRNA-dihydrouridine synthase C</fullName>
    </alternativeName>
</protein>
<feature type="chain" id="PRO_0000162115" description="tRNA-dihydrouridine(16) synthase">
    <location>
        <begin position="1"/>
        <end position="333"/>
    </location>
</feature>
<feature type="active site" description="Proton donor" evidence="1">
    <location>
        <position position="110"/>
    </location>
</feature>
<feature type="binding site" evidence="1">
    <location>
        <begin position="19"/>
        <end position="21"/>
    </location>
    <ligand>
        <name>FMN</name>
        <dbReference type="ChEBI" id="CHEBI:58210"/>
    </ligand>
</feature>
<feature type="binding site" evidence="1">
    <location>
        <position position="80"/>
    </location>
    <ligand>
        <name>FMN</name>
        <dbReference type="ChEBI" id="CHEBI:58210"/>
    </ligand>
</feature>
<feature type="binding site" evidence="1">
    <location>
        <position position="151"/>
    </location>
    <ligand>
        <name>FMN</name>
        <dbReference type="ChEBI" id="CHEBI:58210"/>
    </ligand>
</feature>
<feature type="binding site" evidence="1">
    <location>
        <begin position="211"/>
        <end position="213"/>
    </location>
    <ligand>
        <name>FMN</name>
        <dbReference type="ChEBI" id="CHEBI:58210"/>
    </ligand>
</feature>
<feature type="binding site" evidence="1">
    <location>
        <begin position="235"/>
        <end position="236"/>
    </location>
    <ligand>
        <name>FMN</name>
        <dbReference type="ChEBI" id="CHEBI:58210"/>
    </ligand>
</feature>
<feature type="site" description="Interacts with tRNA; defines subfamily-specific binding signature" evidence="1">
    <location>
        <position position="47"/>
    </location>
</feature>
<feature type="site" description="Interacts with tRNA" evidence="1">
    <location>
        <position position="107"/>
    </location>
</feature>
<feature type="site" description="Interacts with tRNA" evidence="1">
    <location>
        <position position="188"/>
    </location>
</feature>
<feature type="site" description="Interacts with tRNA; defines subfamily-specific binding signature" evidence="1">
    <location>
        <position position="289"/>
    </location>
</feature>
<feature type="site" description="Interacts with tRNA; defines subfamily-specific binding signature" evidence="1">
    <location>
        <position position="291"/>
    </location>
</feature>
<feature type="site" description="Interacts with tRNA; defines subfamily-specific binding signature" evidence="1">
    <location>
        <position position="312"/>
    </location>
</feature>
<reference key="1">
    <citation type="journal article" date="2000" name="Science">
        <title>Complete genome sequence of Neisseria meningitidis serogroup B strain MC58.</title>
        <authorList>
            <person name="Tettelin H."/>
            <person name="Saunders N.J."/>
            <person name="Heidelberg J.F."/>
            <person name="Jeffries A.C."/>
            <person name="Nelson K.E."/>
            <person name="Eisen J.A."/>
            <person name="Ketchum K.A."/>
            <person name="Hood D.W."/>
            <person name="Peden J.F."/>
            <person name="Dodson R.J."/>
            <person name="Nelson W.C."/>
            <person name="Gwinn M.L."/>
            <person name="DeBoy R.T."/>
            <person name="Peterson J.D."/>
            <person name="Hickey E.K."/>
            <person name="Haft D.H."/>
            <person name="Salzberg S.L."/>
            <person name="White O."/>
            <person name="Fleischmann R.D."/>
            <person name="Dougherty B.A."/>
            <person name="Mason T.M."/>
            <person name="Ciecko A."/>
            <person name="Parksey D.S."/>
            <person name="Blair E."/>
            <person name="Cittone H."/>
            <person name="Clark E.B."/>
            <person name="Cotton M.D."/>
            <person name="Utterback T.R."/>
            <person name="Khouri H.M."/>
            <person name="Qin H."/>
            <person name="Vamathevan J.J."/>
            <person name="Gill J."/>
            <person name="Scarlato V."/>
            <person name="Masignani V."/>
            <person name="Pizza M."/>
            <person name="Grandi G."/>
            <person name="Sun L."/>
            <person name="Smith H.O."/>
            <person name="Fraser C.M."/>
            <person name="Moxon E.R."/>
            <person name="Rappuoli R."/>
            <person name="Venter J.C."/>
        </authorList>
    </citation>
    <scope>NUCLEOTIDE SEQUENCE [LARGE SCALE GENOMIC DNA]</scope>
    <source>
        <strain>ATCC BAA-335 / MC58</strain>
    </source>
</reference>
<dbReference type="EC" id="1.3.1.-" evidence="1"/>
<dbReference type="EMBL" id="AE002098">
    <property type="protein sequence ID" value="AAF41402.1"/>
    <property type="molecule type" value="Genomic_DNA"/>
</dbReference>
<dbReference type="PIR" id="G81132">
    <property type="entry name" value="G81132"/>
</dbReference>
<dbReference type="RefSeq" id="NP_274035.1">
    <property type="nucleotide sequence ID" value="NC_003112.2"/>
</dbReference>
<dbReference type="RefSeq" id="WP_002225293.1">
    <property type="nucleotide sequence ID" value="NC_003112.2"/>
</dbReference>
<dbReference type="SMR" id="Q9JZL5"/>
<dbReference type="FunCoup" id="Q9JZL5">
    <property type="interactions" value="112"/>
</dbReference>
<dbReference type="STRING" id="122586.NMB0999"/>
<dbReference type="PaxDb" id="122586-NMB0999"/>
<dbReference type="DNASU" id="903134"/>
<dbReference type="KEGG" id="nme:NMB0999"/>
<dbReference type="PATRIC" id="fig|122586.8.peg.1275"/>
<dbReference type="HOGENOM" id="CLU_013299_0_4_4"/>
<dbReference type="InParanoid" id="Q9JZL5"/>
<dbReference type="OrthoDB" id="5289281at2"/>
<dbReference type="Proteomes" id="UP000000425">
    <property type="component" value="Chromosome"/>
</dbReference>
<dbReference type="GO" id="GO:0050660">
    <property type="term" value="F:flavin adenine dinucleotide binding"/>
    <property type="evidence" value="ECO:0007669"/>
    <property type="project" value="InterPro"/>
</dbReference>
<dbReference type="GO" id="GO:0010181">
    <property type="term" value="F:FMN binding"/>
    <property type="evidence" value="ECO:0007669"/>
    <property type="project" value="UniProtKB-UniRule"/>
</dbReference>
<dbReference type="GO" id="GO:0000049">
    <property type="term" value="F:tRNA binding"/>
    <property type="evidence" value="ECO:0007669"/>
    <property type="project" value="UniProtKB-UniRule"/>
</dbReference>
<dbReference type="GO" id="GO:0102262">
    <property type="term" value="F:tRNA-dihydrouridine16 synthase activity"/>
    <property type="evidence" value="ECO:0007669"/>
    <property type="project" value="RHEA"/>
</dbReference>
<dbReference type="CDD" id="cd02801">
    <property type="entry name" value="DUS_like_FMN"/>
    <property type="match status" value="1"/>
</dbReference>
<dbReference type="Gene3D" id="3.20.20.70">
    <property type="entry name" value="Aldolase class I"/>
    <property type="match status" value="1"/>
</dbReference>
<dbReference type="Gene3D" id="1.20.225.30">
    <property type="entry name" value="Dihydrouridine synthase, C-terminal recognition domain"/>
    <property type="match status" value="1"/>
</dbReference>
<dbReference type="HAMAP" id="MF_02043">
    <property type="entry name" value="DusC_subfam"/>
    <property type="match status" value="1"/>
</dbReference>
<dbReference type="InterPro" id="IPR013785">
    <property type="entry name" value="Aldolase_TIM"/>
</dbReference>
<dbReference type="InterPro" id="IPR035587">
    <property type="entry name" value="DUS-like_FMN-bd"/>
</dbReference>
<dbReference type="InterPro" id="IPR001269">
    <property type="entry name" value="DUS_fam"/>
</dbReference>
<dbReference type="InterPro" id="IPR032886">
    <property type="entry name" value="DusC"/>
</dbReference>
<dbReference type="InterPro" id="IPR042270">
    <property type="entry name" value="DusC_C"/>
</dbReference>
<dbReference type="InterPro" id="IPR018517">
    <property type="entry name" value="tRNA_hU_synthase_CS"/>
</dbReference>
<dbReference type="PANTHER" id="PTHR11082">
    <property type="entry name" value="TRNA-DIHYDROURIDINE SYNTHASE"/>
    <property type="match status" value="1"/>
</dbReference>
<dbReference type="PANTHER" id="PTHR11082:SF26">
    <property type="entry name" value="TRNA-DIHYDROURIDINE(16) SYNTHASE"/>
    <property type="match status" value="1"/>
</dbReference>
<dbReference type="Pfam" id="PF01207">
    <property type="entry name" value="Dus"/>
    <property type="match status" value="1"/>
</dbReference>
<dbReference type="PIRSF" id="PIRSF006621">
    <property type="entry name" value="Dus"/>
    <property type="match status" value="1"/>
</dbReference>
<dbReference type="SUPFAM" id="SSF51395">
    <property type="entry name" value="FMN-linked oxidoreductases"/>
    <property type="match status" value="1"/>
</dbReference>
<dbReference type="PROSITE" id="PS01136">
    <property type="entry name" value="UPF0034"/>
    <property type="match status" value="1"/>
</dbReference>
<organism>
    <name type="scientific">Neisseria meningitidis serogroup B (strain ATCC BAA-335 / MC58)</name>
    <dbReference type="NCBI Taxonomy" id="122586"/>
    <lineage>
        <taxon>Bacteria</taxon>
        <taxon>Pseudomonadati</taxon>
        <taxon>Pseudomonadota</taxon>
        <taxon>Betaproteobacteria</taxon>
        <taxon>Neisseriales</taxon>
        <taxon>Neisseriaceae</taxon>
        <taxon>Neisseria</taxon>
    </lineage>
</organism>
<sequence length="333" mass="37258">MIDRQTNEPKQKTRIILAPMQGLVDDVMRDLLTRIGGYDECVSEFVRITHTVHSRSIWLKYVPEIANGNKTFSGTPCTVQLLGSDADNMAANALEAVRFGANKIDLNFGCPAPTVNKHKGGAILLKEPELIFHIVKTLRGRLPAHIPLTAKMRLGYEDKSRALECACAIAEGGACGLTVHARTKAEGYEPPAHWEWIRKIRDSVNIPVTANGDVFSLQDYIGIKTISGCNSVMLGRGAVIRPDLARQIKQYENGGPVKDTDFAEVSKWIRQFFELCLTKEANNKYPLARLKQWLGMMKKEFAAAQNLFDRVRTVKDADEVRNILAEFEREMNT</sequence>
<gene>
    <name evidence="1" type="primary">dusC</name>
    <name type="ordered locus">NMB0999</name>
</gene>
<proteinExistence type="inferred from homology"/>
<name>DUSC_NEIMB</name>
<evidence type="ECO:0000255" key="1">
    <source>
        <dbReference type="HAMAP-Rule" id="MF_02043"/>
    </source>
</evidence>
<keyword id="KW-0285">Flavoprotein</keyword>
<keyword id="KW-0288">FMN</keyword>
<keyword id="KW-0521">NADP</keyword>
<keyword id="KW-0560">Oxidoreductase</keyword>
<keyword id="KW-1185">Reference proteome</keyword>
<keyword id="KW-0694">RNA-binding</keyword>
<keyword id="KW-0819">tRNA processing</keyword>
<keyword id="KW-0820">tRNA-binding</keyword>
<comment type="function">
    <text evidence="1">Catalyzes the synthesis of 5,6-dihydrouridine (D), a modified base found in the D-loop of most tRNAs, via the reduction of the C5-C6 double bond in target uridines. Specifically modifies U16 in tRNAs.</text>
</comment>
<comment type="catalytic activity">
    <reaction evidence="1">
        <text>5,6-dihydrouridine(16) in tRNA + NADP(+) = uridine(16) in tRNA + NADPH + H(+)</text>
        <dbReference type="Rhea" id="RHEA:53376"/>
        <dbReference type="Rhea" id="RHEA-COMP:13543"/>
        <dbReference type="Rhea" id="RHEA-COMP:13544"/>
        <dbReference type="ChEBI" id="CHEBI:15378"/>
        <dbReference type="ChEBI" id="CHEBI:57783"/>
        <dbReference type="ChEBI" id="CHEBI:58349"/>
        <dbReference type="ChEBI" id="CHEBI:65315"/>
        <dbReference type="ChEBI" id="CHEBI:74443"/>
    </reaction>
</comment>
<comment type="catalytic activity">
    <reaction evidence="1">
        <text>5,6-dihydrouridine(16) in tRNA + NAD(+) = uridine(16) in tRNA + NADH + H(+)</text>
        <dbReference type="Rhea" id="RHEA:53380"/>
        <dbReference type="Rhea" id="RHEA-COMP:13543"/>
        <dbReference type="Rhea" id="RHEA-COMP:13544"/>
        <dbReference type="ChEBI" id="CHEBI:15378"/>
        <dbReference type="ChEBI" id="CHEBI:57540"/>
        <dbReference type="ChEBI" id="CHEBI:57945"/>
        <dbReference type="ChEBI" id="CHEBI:65315"/>
        <dbReference type="ChEBI" id="CHEBI:74443"/>
    </reaction>
</comment>
<comment type="cofactor">
    <cofactor evidence="1">
        <name>FMN</name>
        <dbReference type="ChEBI" id="CHEBI:58210"/>
    </cofactor>
</comment>
<comment type="similarity">
    <text evidence="1">Belongs to the Dus family. DusC subfamily.</text>
</comment>
<accession>Q9JZL5</accession>